<name>SAM50_MOUSE</name>
<evidence type="ECO:0000250" key="1"/>
<evidence type="ECO:0000250" key="2">
    <source>
        <dbReference type="UniProtKB" id="Q6AXV4"/>
    </source>
</evidence>
<evidence type="ECO:0000250" key="3">
    <source>
        <dbReference type="UniProtKB" id="Q9Y512"/>
    </source>
</evidence>
<evidence type="ECO:0000255" key="4">
    <source>
        <dbReference type="PROSITE-ProRule" id="PRU01115"/>
    </source>
</evidence>
<evidence type="ECO:0000269" key="5">
    <source>
    </source>
</evidence>
<evidence type="ECO:0000269" key="6">
    <source>
    </source>
</evidence>
<evidence type="ECO:0000305" key="7"/>
<comment type="function">
    <text evidence="3">Plays a crucial role in the maintenance of the structure of mitochondrial cristae and the proper assembly of the mitochondrial respiratory chain complexes. Required for the assembly of TOMM40 into the TOM complex.</text>
</comment>
<comment type="subunit">
    <text evidence="3 5">Associates with the mitochondrial contact site and cristae organizing system (MICOS) complex, composed of at least MICOS10/MIC10, CHCHD3/MIC19, CHCHD6/MIC25, APOOL/MIC27, IMMT/MIC60, APOO/MIC23/MIC26 and QIL1/MIC13. This complex was also known under the names MINOS or MitOS complex (By similarity). The MICOS complex associates with mitochondrial outer membrane proteins SAMM50, MTX1 and MTX2 (together described as components of the mitochondrial outer membrane sorting assembly machinery (SAM) complex) and DNAJC11, mitochondrial inner membrane protein TMEM11 and with HSPA9 (By similarity). The MICOS and SAM complexes together with DNAJC11 are part of a large protein complex spanning both membranes termed the mitochondrial intermembrane space bridging (MIB) complex (By similarity). Interacts with IMMT/MIC60 (By similarity). Interacts with CHCHD3/MIC19 (PubMed:21081504). Interacts with ARMC1 (By similarity).</text>
</comment>
<comment type="subunit">
    <text evidence="6">(Microbial infection) Interacts with parasite T.gondii RH strain MAF1b1; the interaction is probably indirect and results in the disruption of the MIB complex and the formation of SPOTs (structures positive for outer mitochondrial membrane (OMM)), a cellular response to OMM stress, which leads to the constitutive shedding of OMM vesicles.</text>
</comment>
<comment type="subcellular location">
    <subcellularLocation>
        <location evidence="3">Mitochondrion outer membrane</location>
        <topology evidence="1">Multi-pass membrane protein</topology>
    </subcellularLocation>
    <subcellularLocation>
        <location evidence="2">Cytoplasm</location>
    </subcellularLocation>
    <subcellularLocation>
        <location evidence="3">Mitochondrion</location>
    </subcellularLocation>
</comment>
<comment type="domain">
    <text evidence="1">Its C-terminal part seems to contain many membrane-spanning sided beta-sheets, that have the potential to adopt a transmembrane beta-barrel type structure.</text>
</comment>
<comment type="similarity">
    <text evidence="7">Belongs to the SAM50/omp85 family.</text>
</comment>
<gene>
    <name type="primary">Samm50</name>
</gene>
<accession>Q8BGH2</accession>
<accession>Q3TIL3</accession>
<accession>Q3TTG7</accession>
<accession>Q3TWD3</accession>
<dbReference type="EMBL" id="AK039949">
    <property type="protein sequence ID" value="BAC30484.1"/>
    <property type="molecule type" value="mRNA"/>
</dbReference>
<dbReference type="EMBL" id="BC119180">
    <property type="protein sequence ID" value="AAI19181.1"/>
    <property type="molecule type" value="mRNA"/>
</dbReference>
<dbReference type="EMBL" id="BC119178">
    <property type="protein sequence ID" value="AAI19179.1"/>
    <property type="molecule type" value="mRNA"/>
</dbReference>
<dbReference type="EMBL" id="AK159740">
    <property type="protein sequence ID" value="BAE35333.1"/>
    <property type="molecule type" value="mRNA"/>
</dbReference>
<dbReference type="EMBL" id="AK161378">
    <property type="protein sequence ID" value="BAE36358.1"/>
    <property type="molecule type" value="mRNA"/>
</dbReference>
<dbReference type="EMBL" id="AK167806">
    <property type="protein sequence ID" value="BAE39833.1"/>
    <property type="molecule type" value="mRNA"/>
</dbReference>
<dbReference type="EMBL" id="AK169351">
    <property type="protein sequence ID" value="BAE41101.1"/>
    <property type="molecule type" value="mRNA"/>
</dbReference>
<dbReference type="EMBL" id="AK169066">
    <property type="protein sequence ID" value="BAE40853.1"/>
    <property type="molecule type" value="mRNA"/>
</dbReference>
<dbReference type="EMBL" id="AK168510">
    <property type="protein sequence ID" value="BAE40393.1"/>
    <property type="molecule type" value="mRNA"/>
</dbReference>
<dbReference type="EMBL" id="AK144975">
    <property type="protein sequence ID" value="BAE26162.1"/>
    <property type="molecule type" value="mRNA"/>
</dbReference>
<dbReference type="EMBL" id="AK084395">
    <property type="protein sequence ID" value="BAC39174.1"/>
    <property type="molecule type" value="mRNA"/>
</dbReference>
<dbReference type="EMBL" id="AK041783">
    <property type="protein sequence ID" value="BAC31062.1"/>
    <property type="molecule type" value="mRNA"/>
</dbReference>
<dbReference type="CCDS" id="CCDS37166.1"/>
<dbReference type="RefSeq" id="NP_848729.1">
    <property type="nucleotide sequence ID" value="NM_178614.5"/>
</dbReference>
<dbReference type="SMR" id="Q8BGH2"/>
<dbReference type="BioGRID" id="212974">
    <property type="interactions" value="62"/>
</dbReference>
<dbReference type="FunCoup" id="Q8BGH2">
    <property type="interactions" value="3164"/>
</dbReference>
<dbReference type="IntAct" id="Q8BGH2">
    <property type="interactions" value="57"/>
</dbReference>
<dbReference type="MINT" id="Q8BGH2"/>
<dbReference type="STRING" id="10090.ENSMUSP00000023071"/>
<dbReference type="GlyGen" id="Q8BGH2">
    <property type="glycosylation" value="1 site, 1 O-linked glycan (1 site)"/>
</dbReference>
<dbReference type="iPTMnet" id="Q8BGH2"/>
<dbReference type="PhosphoSitePlus" id="Q8BGH2"/>
<dbReference type="SwissPalm" id="Q8BGH2"/>
<dbReference type="REPRODUCTION-2DPAGE" id="Q8BGH2"/>
<dbReference type="jPOST" id="Q8BGH2"/>
<dbReference type="PaxDb" id="10090-ENSMUSP00000023071"/>
<dbReference type="PeptideAtlas" id="Q8BGH2"/>
<dbReference type="ProteomicsDB" id="255457"/>
<dbReference type="Pumba" id="Q8BGH2"/>
<dbReference type="Antibodypedia" id="27584">
    <property type="antibodies" value="176 antibodies from 27 providers"/>
</dbReference>
<dbReference type="DNASU" id="68653"/>
<dbReference type="Ensembl" id="ENSMUST00000023071.8">
    <property type="protein sequence ID" value="ENSMUSP00000023071.7"/>
    <property type="gene ID" value="ENSMUSG00000022437.8"/>
</dbReference>
<dbReference type="GeneID" id="68653"/>
<dbReference type="KEGG" id="mmu:68653"/>
<dbReference type="UCSC" id="uc007xbx.1">
    <property type="organism name" value="mouse"/>
</dbReference>
<dbReference type="AGR" id="MGI:1915903"/>
<dbReference type="CTD" id="25813"/>
<dbReference type="MGI" id="MGI:1915903">
    <property type="gene designation" value="Samm50"/>
</dbReference>
<dbReference type="VEuPathDB" id="HostDB:ENSMUSG00000022437"/>
<dbReference type="eggNOG" id="KOG2602">
    <property type="taxonomic scope" value="Eukaryota"/>
</dbReference>
<dbReference type="GeneTree" id="ENSGT00390000011355"/>
<dbReference type="HOGENOM" id="CLU_014798_3_0_1"/>
<dbReference type="InParanoid" id="Q8BGH2"/>
<dbReference type="OMA" id="KHPVARF"/>
<dbReference type="OrthoDB" id="1724197at2759"/>
<dbReference type="PhylomeDB" id="Q8BGH2"/>
<dbReference type="TreeFam" id="TF106126"/>
<dbReference type="Reactome" id="R-MMU-9013404">
    <property type="pathway name" value="RAC2 GTPase cycle"/>
</dbReference>
<dbReference type="BioGRID-ORCS" id="68653">
    <property type="hits" value="28 hits in 82 CRISPR screens"/>
</dbReference>
<dbReference type="CD-CODE" id="CE726F99">
    <property type="entry name" value="Postsynaptic density"/>
</dbReference>
<dbReference type="ChiTaRS" id="Samm50">
    <property type="organism name" value="mouse"/>
</dbReference>
<dbReference type="PRO" id="PR:Q8BGH2"/>
<dbReference type="Proteomes" id="UP000000589">
    <property type="component" value="Chromosome 15"/>
</dbReference>
<dbReference type="RNAct" id="Q8BGH2">
    <property type="molecule type" value="protein"/>
</dbReference>
<dbReference type="Bgee" id="ENSMUSG00000022437">
    <property type="expression patterns" value="Expressed in paneth cell and 257 other cell types or tissues"/>
</dbReference>
<dbReference type="GO" id="GO:0005743">
    <property type="term" value="C:mitochondrial inner membrane"/>
    <property type="evidence" value="ECO:0007005"/>
    <property type="project" value="MGI"/>
</dbReference>
<dbReference type="GO" id="GO:0005739">
    <property type="term" value="C:mitochondrion"/>
    <property type="evidence" value="ECO:0007005"/>
    <property type="project" value="MGI"/>
</dbReference>
<dbReference type="GO" id="GO:0001401">
    <property type="term" value="C:SAM complex"/>
    <property type="evidence" value="ECO:0007669"/>
    <property type="project" value="Ensembl"/>
</dbReference>
<dbReference type="GO" id="GO:0042407">
    <property type="term" value="P:cristae formation"/>
    <property type="evidence" value="ECO:0000250"/>
    <property type="project" value="UniProtKB"/>
</dbReference>
<dbReference type="GO" id="GO:0045040">
    <property type="term" value="P:protein insertion into mitochondrial outer membrane"/>
    <property type="evidence" value="ECO:0007669"/>
    <property type="project" value="Ensembl"/>
</dbReference>
<dbReference type="FunFam" id="2.40.160.50:FF:000002">
    <property type="entry name" value="sorting and assembly machinery component 50 homolog"/>
    <property type="match status" value="1"/>
</dbReference>
<dbReference type="FunFam" id="3.10.20.310:FF:000010">
    <property type="entry name" value="sorting and assembly machinery component 50 homolog"/>
    <property type="match status" value="1"/>
</dbReference>
<dbReference type="Gene3D" id="3.10.20.310">
    <property type="entry name" value="membrane protein fhac"/>
    <property type="match status" value="1"/>
</dbReference>
<dbReference type="Gene3D" id="2.40.160.50">
    <property type="entry name" value="membrane protein fhac: a member of the omp85/tpsb transporter family"/>
    <property type="match status" value="1"/>
</dbReference>
<dbReference type="InterPro" id="IPR000184">
    <property type="entry name" value="Bac_surfAg_D15"/>
</dbReference>
<dbReference type="InterPro" id="IPR039910">
    <property type="entry name" value="D15-like"/>
</dbReference>
<dbReference type="InterPro" id="IPR034746">
    <property type="entry name" value="POTRA"/>
</dbReference>
<dbReference type="PANTHER" id="PTHR12815:SF18">
    <property type="entry name" value="SORTING AND ASSEMBLY MACHINERY COMPONENT 50 HOMOLOG"/>
    <property type="match status" value="1"/>
</dbReference>
<dbReference type="PANTHER" id="PTHR12815">
    <property type="entry name" value="SORTING AND ASSEMBLY MACHINERY SAMM50 PROTEIN FAMILY MEMBER"/>
    <property type="match status" value="1"/>
</dbReference>
<dbReference type="Pfam" id="PF01103">
    <property type="entry name" value="Omp85"/>
    <property type="match status" value="1"/>
</dbReference>
<dbReference type="PROSITE" id="PS51779">
    <property type="entry name" value="POTRA"/>
    <property type="match status" value="1"/>
</dbReference>
<sequence length="469" mass="51864">MGTVHARSLEPLPSSGTDFGALGEEAEFVEVEPEAKQEILENKDVVVQHVHFDGLGRTKDDIIICEIGEVFKAKNLIEVMRRSHEAREKLLRLGIFRQVDVLIDTCHGEDALPNGLDVTFEVTELRRLTGSYNTMVGNNEGSMVLGLKLPNLLGRAEKVTFQFSYGTKETSYGLSFFKPQPGNFERNFSVNLYKVTGQFPWSSLRETDRGVSAEYSFPLWKTSHTVKWEGVWRELGCLSRTASFAVRKESGHSLKSSLSHAMVIDSRNSSILPRRGALFKVNQELAGYTGGDVSFIKEDFELQLNKPLALDSVFSTSLWGGMLVPIGDKPSSIADRFYLGGPTSVRGFSMHSIGPQSEGDYLGGEAYWAGGLHLYTPLPFRPGQGGFGELFRTHFFLNAGNLCNLNYGEGPKAHIRKLAECIRWSYGAGVVLRLGNIARLELNYCIPMGVQGGDRICDGVQFGAGIRFL</sequence>
<proteinExistence type="evidence at protein level"/>
<keyword id="KW-0963">Cytoplasm</keyword>
<keyword id="KW-0903">Direct protein sequencing</keyword>
<keyword id="KW-0472">Membrane</keyword>
<keyword id="KW-0488">Methylation</keyword>
<keyword id="KW-0496">Mitochondrion</keyword>
<keyword id="KW-1000">Mitochondrion outer membrane</keyword>
<keyword id="KW-1185">Reference proteome</keyword>
<keyword id="KW-0812">Transmembrane</keyword>
<keyword id="KW-1134">Transmembrane beta strand</keyword>
<protein>
    <recommendedName>
        <fullName>Sorting and assembly machinery component 50 homolog</fullName>
    </recommendedName>
</protein>
<organism>
    <name type="scientific">Mus musculus</name>
    <name type="common">Mouse</name>
    <dbReference type="NCBI Taxonomy" id="10090"/>
    <lineage>
        <taxon>Eukaryota</taxon>
        <taxon>Metazoa</taxon>
        <taxon>Chordata</taxon>
        <taxon>Craniata</taxon>
        <taxon>Vertebrata</taxon>
        <taxon>Euteleostomi</taxon>
        <taxon>Mammalia</taxon>
        <taxon>Eutheria</taxon>
        <taxon>Euarchontoglires</taxon>
        <taxon>Glires</taxon>
        <taxon>Rodentia</taxon>
        <taxon>Myomorpha</taxon>
        <taxon>Muroidea</taxon>
        <taxon>Muridae</taxon>
        <taxon>Murinae</taxon>
        <taxon>Mus</taxon>
        <taxon>Mus</taxon>
    </lineage>
</organism>
<reference key="1">
    <citation type="journal article" date="2005" name="Science">
        <title>The transcriptional landscape of the mammalian genome.</title>
        <authorList>
            <person name="Carninci P."/>
            <person name="Kasukawa T."/>
            <person name="Katayama S."/>
            <person name="Gough J."/>
            <person name="Frith M.C."/>
            <person name="Maeda N."/>
            <person name="Oyama R."/>
            <person name="Ravasi T."/>
            <person name="Lenhard B."/>
            <person name="Wells C."/>
            <person name="Kodzius R."/>
            <person name="Shimokawa K."/>
            <person name="Bajic V.B."/>
            <person name="Brenner S.E."/>
            <person name="Batalov S."/>
            <person name="Forrest A.R."/>
            <person name="Zavolan M."/>
            <person name="Davis M.J."/>
            <person name="Wilming L.G."/>
            <person name="Aidinis V."/>
            <person name="Allen J.E."/>
            <person name="Ambesi-Impiombato A."/>
            <person name="Apweiler R."/>
            <person name="Aturaliya R.N."/>
            <person name="Bailey T.L."/>
            <person name="Bansal M."/>
            <person name="Baxter L."/>
            <person name="Beisel K.W."/>
            <person name="Bersano T."/>
            <person name="Bono H."/>
            <person name="Chalk A.M."/>
            <person name="Chiu K.P."/>
            <person name="Choudhary V."/>
            <person name="Christoffels A."/>
            <person name="Clutterbuck D.R."/>
            <person name="Crowe M.L."/>
            <person name="Dalla E."/>
            <person name="Dalrymple B.P."/>
            <person name="de Bono B."/>
            <person name="Della Gatta G."/>
            <person name="di Bernardo D."/>
            <person name="Down T."/>
            <person name="Engstrom P."/>
            <person name="Fagiolini M."/>
            <person name="Faulkner G."/>
            <person name="Fletcher C.F."/>
            <person name="Fukushima T."/>
            <person name="Furuno M."/>
            <person name="Futaki S."/>
            <person name="Gariboldi M."/>
            <person name="Georgii-Hemming P."/>
            <person name="Gingeras T.R."/>
            <person name="Gojobori T."/>
            <person name="Green R.E."/>
            <person name="Gustincich S."/>
            <person name="Harbers M."/>
            <person name="Hayashi Y."/>
            <person name="Hensch T.K."/>
            <person name="Hirokawa N."/>
            <person name="Hill D."/>
            <person name="Huminiecki L."/>
            <person name="Iacono M."/>
            <person name="Ikeo K."/>
            <person name="Iwama A."/>
            <person name="Ishikawa T."/>
            <person name="Jakt M."/>
            <person name="Kanapin A."/>
            <person name="Katoh M."/>
            <person name="Kawasawa Y."/>
            <person name="Kelso J."/>
            <person name="Kitamura H."/>
            <person name="Kitano H."/>
            <person name="Kollias G."/>
            <person name="Krishnan S.P."/>
            <person name="Kruger A."/>
            <person name="Kummerfeld S.K."/>
            <person name="Kurochkin I.V."/>
            <person name="Lareau L.F."/>
            <person name="Lazarevic D."/>
            <person name="Lipovich L."/>
            <person name="Liu J."/>
            <person name="Liuni S."/>
            <person name="McWilliam S."/>
            <person name="Madan Babu M."/>
            <person name="Madera M."/>
            <person name="Marchionni L."/>
            <person name="Matsuda H."/>
            <person name="Matsuzawa S."/>
            <person name="Miki H."/>
            <person name="Mignone F."/>
            <person name="Miyake S."/>
            <person name="Morris K."/>
            <person name="Mottagui-Tabar S."/>
            <person name="Mulder N."/>
            <person name="Nakano N."/>
            <person name="Nakauchi H."/>
            <person name="Ng P."/>
            <person name="Nilsson R."/>
            <person name="Nishiguchi S."/>
            <person name="Nishikawa S."/>
            <person name="Nori F."/>
            <person name="Ohara O."/>
            <person name="Okazaki Y."/>
            <person name="Orlando V."/>
            <person name="Pang K.C."/>
            <person name="Pavan W.J."/>
            <person name="Pavesi G."/>
            <person name="Pesole G."/>
            <person name="Petrovsky N."/>
            <person name="Piazza S."/>
            <person name="Reed J."/>
            <person name="Reid J.F."/>
            <person name="Ring B.Z."/>
            <person name="Ringwald M."/>
            <person name="Rost B."/>
            <person name="Ruan Y."/>
            <person name="Salzberg S.L."/>
            <person name="Sandelin A."/>
            <person name="Schneider C."/>
            <person name="Schoenbach C."/>
            <person name="Sekiguchi K."/>
            <person name="Semple C.A."/>
            <person name="Seno S."/>
            <person name="Sessa L."/>
            <person name="Sheng Y."/>
            <person name="Shibata Y."/>
            <person name="Shimada H."/>
            <person name="Shimada K."/>
            <person name="Silva D."/>
            <person name="Sinclair B."/>
            <person name="Sperling S."/>
            <person name="Stupka E."/>
            <person name="Sugiura K."/>
            <person name="Sultana R."/>
            <person name="Takenaka Y."/>
            <person name="Taki K."/>
            <person name="Tammoja K."/>
            <person name="Tan S.L."/>
            <person name="Tang S."/>
            <person name="Taylor M.S."/>
            <person name="Tegner J."/>
            <person name="Teichmann S.A."/>
            <person name="Ueda H.R."/>
            <person name="van Nimwegen E."/>
            <person name="Verardo R."/>
            <person name="Wei C.L."/>
            <person name="Yagi K."/>
            <person name="Yamanishi H."/>
            <person name="Zabarovsky E."/>
            <person name="Zhu S."/>
            <person name="Zimmer A."/>
            <person name="Hide W."/>
            <person name="Bult C."/>
            <person name="Grimmond S.M."/>
            <person name="Teasdale R.D."/>
            <person name="Liu E.T."/>
            <person name="Brusic V."/>
            <person name="Quackenbush J."/>
            <person name="Wahlestedt C."/>
            <person name="Mattick J.S."/>
            <person name="Hume D.A."/>
            <person name="Kai C."/>
            <person name="Sasaki D."/>
            <person name="Tomaru Y."/>
            <person name="Fukuda S."/>
            <person name="Kanamori-Katayama M."/>
            <person name="Suzuki M."/>
            <person name="Aoki J."/>
            <person name="Arakawa T."/>
            <person name="Iida J."/>
            <person name="Imamura K."/>
            <person name="Itoh M."/>
            <person name="Kato T."/>
            <person name="Kawaji H."/>
            <person name="Kawagashira N."/>
            <person name="Kawashima T."/>
            <person name="Kojima M."/>
            <person name="Kondo S."/>
            <person name="Konno H."/>
            <person name="Nakano K."/>
            <person name="Ninomiya N."/>
            <person name="Nishio T."/>
            <person name="Okada M."/>
            <person name="Plessy C."/>
            <person name="Shibata K."/>
            <person name="Shiraki T."/>
            <person name="Suzuki S."/>
            <person name="Tagami M."/>
            <person name="Waki K."/>
            <person name="Watahiki A."/>
            <person name="Okamura-Oho Y."/>
            <person name="Suzuki H."/>
            <person name="Kawai J."/>
            <person name="Hayashizaki Y."/>
        </authorList>
    </citation>
    <scope>NUCLEOTIDE SEQUENCE [LARGE SCALE MRNA]</scope>
    <source>
        <strain>BALB/cJ</strain>
        <strain>C57BL/6J</strain>
        <tissue>Eye</tissue>
        <tissue>Heart</tissue>
        <tissue>Mammary gland</tissue>
        <tissue>Stomach</tissue>
        <tissue>Testis</tissue>
        <tissue>Thymus</tissue>
    </source>
</reference>
<reference key="2">
    <citation type="journal article" date="2004" name="Genome Res.">
        <title>The status, quality, and expansion of the NIH full-length cDNA project: the Mammalian Gene Collection (MGC).</title>
        <authorList>
            <consortium name="The MGC Project Team"/>
        </authorList>
    </citation>
    <scope>NUCLEOTIDE SEQUENCE [LARGE SCALE MRNA]</scope>
    <source>
        <tissue>Brain</tissue>
    </source>
</reference>
<reference key="3">
    <citation type="submission" date="2007-03" db="UniProtKB">
        <authorList>
            <person name="Lubec G."/>
            <person name="Klug S."/>
        </authorList>
    </citation>
    <scope>PROTEIN SEQUENCE OF 44-57; 281-297 AND 393-412</scope>
    <scope>IDENTIFICATION BY MASS SPECTROMETRY</scope>
    <source>
        <tissue>Hippocampus</tissue>
    </source>
</reference>
<reference key="4">
    <citation type="journal article" date="2010" name="Cell">
        <title>A tissue-specific atlas of mouse protein phosphorylation and expression.</title>
        <authorList>
            <person name="Huttlin E.L."/>
            <person name="Jedrychowski M.P."/>
            <person name="Elias J.E."/>
            <person name="Goswami T."/>
            <person name="Rad R."/>
            <person name="Beausoleil S.A."/>
            <person name="Villen J."/>
            <person name="Haas W."/>
            <person name="Sowa M.E."/>
            <person name="Gygi S.P."/>
        </authorList>
    </citation>
    <scope>IDENTIFICATION BY MASS SPECTROMETRY [LARGE SCALE ANALYSIS]</scope>
    <source>
        <tissue>Brown adipose tissue</tissue>
        <tissue>Heart</tissue>
        <tissue>Kidney</tissue>
        <tissue>Liver</tissue>
        <tissue>Lung</tissue>
        <tissue>Pancreas</tissue>
        <tissue>Spleen</tissue>
        <tissue>Testis</tissue>
    </source>
</reference>
<reference key="5">
    <citation type="journal article" date="2011" name="J. Biol. Chem.">
        <title>ChChd3, an inner mitochondrial membrane protein, is essential for maintaining crista integrity and mitochondrial function.</title>
        <authorList>
            <person name="Darshi M."/>
            <person name="Mendiola V.L."/>
            <person name="Mackey M.R."/>
            <person name="Murphy A.N."/>
            <person name="Koller A."/>
            <person name="Perkins G.A."/>
            <person name="Ellisman M.H."/>
            <person name="Taylor S.S."/>
        </authorList>
    </citation>
    <scope>INTERACTION WITH CHCHD3</scope>
</reference>
<reference key="6">
    <citation type="journal article" date="2017" name="MSphere">
        <title>Toxoplasma gondii MAF1b Binds the Host Cell MIB Complex To Mediate Mitochondrial Association.</title>
        <authorList>
            <person name="Kelly F.D."/>
            <person name="Wei B.M."/>
            <person name="Cygan A.M."/>
            <person name="Parker M.L."/>
            <person name="Boulanger M.J."/>
            <person name="Boothroyd J.C."/>
        </authorList>
    </citation>
    <scope>INTERACTION WITH T.GONDII MAF1B1 (MICROBIAL INFECTION)</scope>
</reference>
<feature type="chain" id="PRO_0000286399" description="Sorting and assembly machinery component 50 homolog">
    <location>
        <begin position="1"/>
        <end position="469"/>
    </location>
</feature>
<feature type="domain" description="POTRA" evidence="4">
    <location>
        <begin position="45"/>
        <end position="125"/>
    </location>
</feature>
<feature type="modified residue" description="N6-methyllysine" evidence="3">
    <location>
        <position position="255"/>
    </location>
</feature>
<feature type="sequence conflict" description="In Ref. 1; BAE36358." evidence="7" ref="1">
    <original>N</original>
    <variation>D</variation>
    <location>
        <position position="42"/>
    </location>
</feature>
<feature type="sequence conflict" description="In Ref. 1; BAE35333." evidence="7" ref="1">
    <original>F</original>
    <variation>V</variation>
    <location>
        <position position="337"/>
    </location>
</feature>
<feature type="sequence conflict" description="In Ref. 1; BAE39833." evidence="7" ref="1">
    <original>G</original>
    <variation>R</variation>
    <location>
        <position position="465"/>
    </location>
</feature>